<feature type="signal peptide" evidence="6">
    <location>
        <begin position="1"/>
        <end position="23"/>
    </location>
</feature>
<feature type="chain" id="PRO_0000430526" description="Senescence-specific cysteine protease SAG39" evidence="6">
    <location>
        <begin position="24"/>
        <end position="339"/>
    </location>
</feature>
<feature type="active site" evidence="7">
    <location>
        <position position="147"/>
    </location>
</feature>
<feature type="active site" evidence="8">
    <location>
        <position position="282"/>
    </location>
</feature>
<feature type="active site" evidence="9">
    <location>
        <position position="303"/>
    </location>
</feature>
<feature type="disulfide bond" evidence="1">
    <location>
        <begin position="144"/>
        <end position="187"/>
    </location>
</feature>
<feature type="disulfide bond" evidence="2">
    <location>
        <begin position="178"/>
        <end position="220"/>
    </location>
</feature>
<feature type="disulfide bond" evidence="2">
    <location>
        <begin position="276"/>
        <end position="328"/>
    </location>
</feature>
<keyword id="KW-1015">Disulfide bond</keyword>
<keyword id="KW-0378">Hydrolase</keyword>
<keyword id="KW-0645">Protease</keyword>
<keyword id="KW-1185">Reference proteome</keyword>
<keyword id="KW-0732">Signal</keyword>
<keyword id="KW-0788">Thiol protease</keyword>
<keyword id="KW-0926">Vacuole</keyword>
<evidence type="ECO:0000250" key="1">
    <source>
        <dbReference type="UniProtKB" id="P07858"/>
    </source>
</evidence>
<evidence type="ECO:0000250" key="2">
    <source>
        <dbReference type="UniProtKB" id="P25250"/>
    </source>
</evidence>
<evidence type="ECO:0000250" key="3">
    <source>
        <dbReference type="UniProtKB" id="P80884"/>
    </source>
</evidence>
<evidence type="ECO:0000250" key="4">
    <source>
        <dbReference type="UniProtKB" id="Q7XWK5"/>
    </source>
</evidence>
<evidence type="ECO:0000250" key="5">
    <source>
        <dbReference type="UniProtKB" id="Q9FJ47"/>
    </source>
</evidence>
<evidence type="ECO:0000255" key="6"/>
<evidence type="ECO:0000255" key="7">
    <source>
        <dbReference type="PROSITE-ProRule" id="PRU10088"/>
    </source>
</evidence>
<evidence type="ECO:0000255" key="8">
    <source>
        <dbReference type="PROSITE-ProRule" id="PRU10089"/>
    </source>
</evidence>
<evidence type="ECO:0000255" key="9">
    <source>
        <dbReference type="PROSITE-ProRule" id="PRU10090"/>
    </source>
</evidence>
<evidence type="ECO:0000305" key="10"/>
<evidence type="ECO:0000312" key="11">
    <source>
        <dbReference type="EMBL" id="EAY93058.1"/>
    </source>
</evidence>
<organism evidence="11">
    <name type="scientific">Oryza sativa subsp. indica</name>
    <name type="common">Rice</name>
    <dbReference type="NCBI Taxonomy" id="39946"/>
    <lineage>
        <taxon>Eukaryota</taxon>
        <taxon>Viridiplantae</taxon>
        <taxon>Streptophyta</taxon>
        <taxon>Embryophyta</taxon>
        <taxon>Tracheophyta</taxon>
        <taxon>Spermatophyta</taxon>
        <taxon>Magnoliopsida</taxon>
        <taxon>Liliopsida</taxon>
        <taxon>Poales</taxon>
        <taxon>Poaceae</taxon>
        <taxon>BOP clade</taxon>
        <taxon>Oryzoideae</taxon>
        <taxon>Oryzeae</taxon>
        <taxon>Oryzinae</taxon>
        <taxon>Oryza</taxon>
        <taxon>Oryza sativa</taxon>
    </lineage>
</organism>
<reference key="1">
    <citation type="journal article" date="2005" name="PLoS Biol.">
        <title>The genomes of Oryza sativa: a history of duplications.</title>
        <authorList>
            <person name="Yu J."/>
            <person name="Wang J."/>
            <person name="Lin W."/>
            <person name="Li S."/>
            <person name="Li H."/>
            <person name="Zhou J."/>
            <person name="Ni P."/>
            <person name="Dong W."/>
            <person name="Hu S."/>
            <person name="Zeng C."/>
            <person name="Zhang J."/>
            <person name="Zhang Y."/>
            <person name="Li R."/>
            <person name="Xu Z."/>
            <person name="Li S."/>
            <person name="Li X."/>
            <person name="Zheng H."/>
            <person name="Cong L."/>
            <person name="Lin L."/>
            <person name="Yin J."/>
            <person name="Geng J."/>
            <person name="Li G."/>
            <person name="Shi J."/>
            <person name="Liu J."/>
            <person name="Lv H."/>
            <person name="Li J."/>
            <person name="Wang J."/>
            <person name="Deng Y."/>
            <person name="Ran L."/>
            <person name="Shi X."/>
            <person name="Wang X."/>
            <person name="Wu Q."/>
            <person name="Li C."/>
            <person name="Ren X."/>
            <person name="Wang J."/>
            <person name="Wang X."/>
            <person name="Li D."/>
            <person name="Liu D."/>
            <person name="Zhang X."/>
            <person name="Ji Z."/>
            <person name="Zhao W."/>
            <person name="Sun Y."/>
            <person name="Zhang Z."/>
            <person name="Bao J."/>
            <person name="Han Y."/>
            <person name="Dong L."/>
            <person name="Ji J."/>
            <person name="Chen P."/>
            <person name="Wu S."/>
            <person name="Liu J."/>
            <person name="Xiao Y."/>
            <person name="Bu D."/>
            <person name="Tan J."/>
            <person name="Yang L."/>
            <person name="Ye C."/>
            <person name="Zhang J."/>
            <person name="Xu J."/>
            <person name="Zhou Y."/>
            <person name="Yu Y."/>
            <person name="Zhang B."/>
            <person name="Zhuang S."/>
            <person name="Wei H."/>
            <person name="Liu B."/>
            <person name="Lei M."/>
            <person name="Yu H."/>
            <person name="Li Y."/>
            <person name="Xu H."/>
            <person name="Wei S."/>
            <person name="He X."/>
            <person name="Fang L."/>
            <person name="Zhang Z."/>
            <person name="Zhang Y."/>
            <person name="Huang X."/>
            <person name="Su Z."/>
            <person name="Tong W."/>
            <person name="Li J."/>
            <person name="Tong Z."/>
            <person name="Li S."/>
            <person name="Ye J."/>
            <person name="Wang L."/>
            <person name="Fang L."/>
            <person name="Lei T."/>
            <person name="Chen C.-S."/>
            <person name="Chen H.-C."/>
            <person name="Xu Z."/>
            <person name="Li H."/>
            <person name="Huang H."/>
            <person name="Zhang F."/>
            <person name="Xu H."/>
            <person name="Li N."/>
            <person name="Zhao C."/>
            <person name="Li S."/>
            <person name="Dong L."/>
            <person name="Huang Y."/>
            <person name="Li L."/>
            <person name="Xi Y."/>
            <person name="Qi Q."/>
            <person name="Li W."/>
            <person name="Zhang B."/>
            <person name="Hu W."/>
            <person name="Zhang Y."/>
            <person name="Tian X."/>
            <person name="Jiao Y."/>
            <person name="Liang X."/>
            <person name="Jin J."/>
            <person name="Gao L."/>
            <person name="Zheng W."/>
            <person name="Hao B."/>
            <person name="Liu S.-M."/>
            <person name="Wang W."/>
            <person name="Yuan L."/>
            <person name="Cao M."/>
            <person name="McDermott J."/>
            <person name="Samudrala R."/>
            <person name="Wang J."/>
            <person name="Wong G.K.-S."/>
            <person name="Yang H."/>
        </authorList>
    </citation>
    <scope>NUCLEOTIDE SEQUENCE [LARGE SCALE GENOMIC DNA]</scope>
    <source>
        <strain>cv. 93-11</strain>
    </source>
</reference>
<comment type="function">
    <text evidence="5">Cysteine protease that may have a developmental senescence specific cell death function during apoptosis, heavy metal detoxification, and hypersensitive response.</text>
</comment>
<comment type="subcellular location">
    <subcellularLocation>
        <location evidence="5">Vacuole</location>
    </subcellularLocation>
    <text evidence="5">Localized in senescence-associated vacuoles (SAVs) with intense proteolytic activity that develop in the peripheral cytoplasm of mesophyll and guard cells.</text>
</comment>
<comment type="similarity">
    <text evidence="7 8 9">Belongs to the peptidase C1 family.</text>
</comment>
<protein>
    <recommendedName>
        <fullName evidence="10">Senescence-specific cysteine protease SAG39</fullName>
        <ecNumber evidence="3">3.4.22.-</ecNumber>
    </recommendedName>
    <alternativeName>
        <fullName evidence="10">Cysteine proteinase SAG39</fullName>
    </alternativeName>
    <alternativeName>
        <fullName evidence="4">Protein SENESCENCE-ASSOCIATED GENE 39</fullName>
    </alternativeName>
</protein>
<sequence length="339" mass="36842">MAMAKALLFAILGCLCLCSAVLAARELSDDAAMAARHERWMAQYGRVYRDDAEKARRFEVFKANVAFIESFNAGNHNFWLGVNQFADLTNDEFRWTKTNKGFIPSTTRVPTGFRYENVNIDALPATVDWRTKGAVTPIKDQGQCGCCWAFSAVAAMEGIVKLSTGKLISLSEQELVDCDVHGEDQGCEGGLMDDAFKFIIKNGGLTTESNYPYAAADDKCKSVSNSVASIKGYEDVPANNEAALMKAVANQPVSVAVDGGDMTFQFYKGGVMTGSCGTDLDHGIVAIGYGKASDGTKYWLLKNSWGTTWGENGFLRMEKDISDKRGMCGLAMEPSYPTA</sequence>
<dbReference type="EC" id="3.4.22.-" evidence="3"/>
<dbReference type="EMBL" id="CM000129">
    <property type="protein sequence ID" value="EAY93058.1"/>
    <property type="molecule type" value="Genomic_DNA"/>
</dbReference>
<dbReference type="SMR" id="A2XQE8"/>
<dbReference type="STRING" id="39946.A2XQE8"/>
<dbReference type="MEROPS" id="C01.104"/>
<dbReference type="EnsemblPlants" id="BGIOSGA015901-TA">
    <property type="protein sequence ID" value="BGIOSGA015901-PA"/>
    <property type="gene ID" value="BGIOSGA015901"/>
</dbReference>
<dbReference type="EnsemblPlants" id="OsKYG_04g0004480.01">
    <property type="protein sequence ID" value="OsKYG_04g0004480.01"/>
    <property type="gene ID" value="OsKYG_04g0004480"/>
</dbReference>
<dbReference type="EnsemblPlants" id="OsPr106_04g0004300.01">
    <property type="protein sequence ID" value="OsPr106_04g0004300.01"/>
    <property type="gene ID" value="OsPr106_04g0004300"/>
</dbReference>
<dbReference type="EnsemblPlants" id="OsZS97_04G004420_01">
    <property type="protein sequence ID" value="OsZS97_04G004420_01"/>
    <property type="gene ID" value="OsZS97_04G004420"/>
</dbReference>
<dbReference type="Gramene" id="BGIOSGA015901-TA">
    <property type="protein sequence ID" value="BGIOSGA015901-PA"/>
    <property type="gene ID" value="BGIOSGA015901"/>
</dbReference>
<dbReference type="Gramene" id="OsKYG_04g0004480.01">
    <property type="protein sequence ID" value="OsKYG_04g0004480.01"/>
    <property type="gene ID" value="OsKYG_04g0004480"/>
</dbReference>
<dbReference type="Gramene" id="OsPr106_04g0004300.01">
    <property type="protein sequence ID" value="OsPr106_04g0004300.01"/>
    <property type="gene ID" value="OsPr106_04g0004300"/>
</dbReference>
<dbReference type="Gramene" id="OsZS97_04G004420_01">
    <property type="protein sequence ID" value="OsZS97_04G004420_01"/>
    <property type="gene ID" value="OsZS97_04G004420"/>
</dbReference>
<dbReference type="HOGENOM" id="CLU_012184_1_0_1"/>
<dbReference type="OMA" id="NAYAMEY"/>
<dbReference type="Proteomes" id="UP000007015">
    <property type="component" value="Chromosome 4"/>
</dbReference>
<dbReference type="GO" id="GO:0010282">
    <property type="term" value="C:senescence-associated vacuole"/>
    <property type="evidence" value="ECO:0000250"/>
    <property type="project" value="UniProtKB"/>
</dbReference>
<dbReference type="GO" id="GO:0008234">
    <property type="term" value="F:cysteine-type peptidase activity"/>
    <property type="evidence" value="ECO:0007669"/>
    <property type="project" value="UniProtKB-KW"/>
</dbReference>
<dbReference type="GO" id="GO:0010150">
    <property type="term" value="P:leaf senescence"/>
    <property type="evidence" value="ECO:0007669"/>
    <property type="project" value="EnsemblPlants"/>
</dbReference>
<dbReference type="GO" id="GO:0010623">
    <property type="term" value="P:programmed cell death involved in cell development"/>
    <property type="evidence" value="ECO:0000250"/>
    <property type="project" value="UniProtKB"/>
</dbReference>
<dbReference type="GO" id="GO:0006508">
    <property type="term" value="P:proteolysis"/>
    <property type="evidence" value="ECO:0007669"/>
    <property type="project" value="UniProtKB-KW"/>
</dbReference>
<dbReference type="GO" id="GO:0009737">
    <property type="term" value="P:response to abscisic acid"/>
    <property type="evidence" value="ECO:0007669"/>
    <property type="project" value="EnsemblPlants"/>
</dbReference>
<dbReference type="GO" id="GO:0009723">
    <property type="term" value="P:response to ethylene"/>
    <property type="evidence" value="ECO:0007669"/>
    <property type="project" value="EnsemblPlants"/>
</dbReference>
<dbReference type="GO" id="GO:0009739">
    <property type="term" value="P:response to gibberellin"/>
    <property type="evidence" value="ECO:0007669"/>
    <property type="project" value="EnsemblPlants"/>
</dbReference>
<dbReference type="CDD" id="cd02248">
    <property type="entry name" value="Peptidase_C1A"/>
    <property type="match status" value="1"/>
</dbReference>
<dbReference type="FunFam" id="3.90.70.10:FF:000023">
    <property type="entry name" value="Senescence-specific cysteine protease SAG39"/>
    <property type="match status" value="1"/>
</dbReference>
<dbReference type="Gene3D" id="3.90.70.10">
    <property type="entry name" value="Cysteine proteinases"/>
    <property type="match status" value="1"/>
</dbReference>
<dbReference type="InterPro" id="IPR038765">
    <property type="entry name" value="Papain-like_cys_pep_sf"/>
</dbReference>
<dbReference type="InterPro" id="IPR025661">
    <property type="entry name" value="Pept_asp_AS"/>
</dbReference>
<dbReference type="InterPro" id="IPR000169">
    <property type="entry name" value="Pept_cys_AS"/>
</dbReference>
<dbReference type="InterPro" id="IPR025660">
    <property type="entry name" value="Pept_his_AS"/>
</dbReference>
<dbReference type="InterPro" id="IPR013128">
    <property type="entry name" value="Peptidase_C1A"/>
</dbReference>
<dbReference type="InterPro" id="IPR000668">
    <property type="entry name" value="Peptidase_C1A_C"/>
</dbReference>
<dbReference type="InterPro" id="IPR039417">
    <property type="entry name" value="Peptidase_C1A_papain-like"/>
</dbReference>
<dbReference type="InterPro" id="IPR013201">
    <property type="entry name" value="Prot_inhib_I29"/>
</dbReference>
<dbReference type="PANTHER" id="PTHR12411">
    <property type="entry name" value="CYSTEINE PROTEASE FAMILY C1-RELATED"/>
    <property type="match status" value="1"/>
</dbReference>
<dbReference type="Pfam" id="PF08246">
    <property type="entry name" value="Inhibitor_I29"/>
    <property type="match status" value="1"/>
</dbReference>
<dbReference type="Pfam" id="PF00112">
    <property type="entry name" value="Peptidase_C1"/>
    <property type="match status" value="1"/>
</dbReference>
<dbReference type="PRINTS" id="PR00705">
    <property type="entry name" value="PAPAIN"/>
</dbReference>
<dbReference type="SMART" id="SM00848">
    <property type="entry name" value="Inhibitor_I29"/>
    <property type="match status" value="1"/>
</dbReference>
<dbReference type="SMART" id="SM00645">
    <property type="entry name" value="Pept_C1"/>
    <property type="match status" value="1"/>
</dbReference>
<dbReference type="SUPFAM" id="SSF54001">
    <property type="entry name" value="Cysteine proteinases"/>
    <property type="match status" value="1"/>
</dbReference>
<dbReference type="PROSITE" id="PS00640">
    <property type="entry name" value="THIOL_PROTEASE_ASN"/>
    <property type="match status" value="1"/>
</dbReference>
<dbReference type="PROSITE" id="PS00139">
    <property type="entry name" value="THIOL_PROTEASE_CYS"/>
    <property type="match status" value="1"/>
</dbReference>
<dbReference type="PROSITE" id="PS00639">
    <property type="entry name" value="THIOL_PROTEASE_HIS"/>
    <property type="match status" value="1"/>
</dbReference>
<proteinExistence type="inferred from homology"/>
<accession>A2XQE8</accession>
<gene>
    <name evidence="11" type="ORF">OsI_14861</name>
</gene>
<name>SAG39_ORYSI</name>